<gene>
    <name type="primary">sra</name>
    <name type="synonym">rpsV</name>
    <name type="ordered locus">ECP_1482</name>
</gene>
<name>SRA_ECOL5</name>
<organism>
    <name type="scientific">Escherichia coli O6:K15:H31 (strain 536 / UPEC)</name>
    <dbReference type="NCBI Taxonomy" id="362663"/>
    <lineage>
        <taxon>Bacteria</taxon>
        <taxon>Pseudomonadati</taxon>
        <taxon>Pseudomonadota</taxon>
        <taxon>Gammaproteobacteria</taxon>
        <taxon>Enterobacterales</taxon>
        <taxon>Enterobacteriaceae</taxon>
        <taxon>Escherichia</taxon>
    </lineage>
</organism>
<dbReference type="EMBL" id="CP000247">
    <property type="protein sequence ID" value="ABG69489.1"/>
    <property type="molecule type" value="Genomic_DNA"/>
</dbReference>
<dbReference type="RefSeq" id="WP_000841554.1">
    <property type="nucleotide sequence ID" value="NC_008253.1"/>
</dbReference>
<dbReference type="GeneID" id="93775639"/>
<dbReference type="KEGG" id="ecp:ECP_1482"/>
<dbReference type="HOGENOM" id="CLU_210948_0_0_6"/>
<dbReference type="Proteomes" id="UP000009182">
    <property type="component" value="Chromosome"/>
</dbReference>
<dbReference type="GO" id="GO:0006412">
    <property type="term" value="P:translation"/>
    <property type="evidence" value="ECO:0007669"/>
    <property type="project" value="InterPro"/>
</dbReference>
<dbReference type="InterPro" id="IPR012607">
    <property type="entry name" value="SRA-like"/>
</dbReference>
<dbReference type="NCBIfam" id="NF007473">
    <property type="entry name" value="PRK10057.1"/>
    <property type="match status" value="1"/>
</dbReference>
<dbReference type="Pfam" id="PF08136">
    <property type="entry name" value="SRA_like"/>
    <property type="match status" value="1"/>
</dbReference>
<feature type="chain" id="PRO_0000287575" description="Stationary-phase-induced ribosome-associated protein">
    <location>
        <begin position="1"/>
        <end position="45"/>
    </location>
</feature>
<feature type="region of interest" description="Disordered" evidence="2">
    <location>
        <begin position="21"/>
        <end position="45"/>
    </location>
</feature>
<evidence type="ECO:0000250" key="1"/>
<evidence type="ECO:0000256" key="2">
    <source>
        <dbReference type="SAM" id="MobiDB-lite"/>
    </source>
</evidence>
<evidence type="ECO:0000305" key="3"/>
<proteinExistence type="inferred from homology"/>
<reference key="1">
    <citation type="journal article" date="2006" name="Mol. Microbiol.">
        <title>Role of pathogenicity island-associated integrases in the genome plasticity of uropathogenic Escherichia coli strain 536.</title>
        <authorList>
            <person name="Hochhut B."/>
            <person name="Wilde C."/>
            <person name="Balling G."/>
            <person name="Middendorf B."/>
            <person name="Dobrindt U."/>
            <person name="Brzuszkiewicz E."/>
            <person name="Gottschalk G."/>
            <person name="Carniel E."/>
            <person name="Hacker J."/>
        </authorList>
    </citation>
    <scope>NUCLEOTIDE SEQUENCE [LARGE SCALE GENOMIC DNA]</scope>
    <source>
        <strain>536 / UPEC</strain>
    </source>
</reference>
<accession>Q0THU0</accession>
<sequence>MKSNRQARHILGLDHKISNQRKIVTEGDKSSVVNNPTGRKRPAEK</sequence>
<comment type="function">
    <text evidence="1">Although this protein associates with the 30S subunit of the ribosome it is not considered to be a bona fide ribosomal protein.</text>
</comment>
<comment type="subunit">
    <text evidence="1">Associates exclusively with the 30S subunit; there is 0.1 copy per ribosome in the exponential phase and 0.4 copies per ribosome in the stationary phase.</text>
</comment>
<comment type="similarity">
    <text evidence="3">Belongs to the SRA family.</text>
</comment>
<protein>
    <recommendedName>
        <fullName>Stationary-phase-induced ribosome-associated protein</fullName>
        <shortName>SRA</shortName>
    </recommendedName>
    <alternativeName>
        <fullName>30S ribosomal protein S22</fullName>
    </alternativeName>
</protein>